<name>URE2_COREF</name>
<dbReference type="EC" id="3.5.1.5" evidence="1"/>
<dbReference type="EMBL" id="BA000035">
    <property type="protein sequence ID" value="BAC17804.1"/>
    <property type="molecule type" value="Genomic_DNA"/>
</dbReference>
<dbReference type="RefSeq" id="WP_006770041.1">
    <property type="nucleotide sequence ID" value="NC_004369.1"/>
</dbReference>
<dbReference type="SMR" id="Q8FQX3"/>
<dbReference type="STRING" id="196164.gene:10741400"/>
<dbReference type="KEGG" id="cef:CE0994"/>
<dbReference type="eggNOG" id="COG0832">
    <property type="taxonomic scope" value="Bacteria"/>
</dbReference>
<dbReference type="HOGENOM" id="CLU_129707_1_1_11"/>
<dbReference type="OrthoDB" id="9797217at2"/>
<dbReference type="UniPathway" id="UPA00258">
    <property type="reaction ID" value="UER00370"/>
</dbReference>
<dbReference type="Proteomes" id="UP000001409">
    <property type="component" value="Chromosome"/>
</dbReference>
<dbReference type="GO" id="GO:0035550">
    <property type="term" value="C:urease complex"/>
    <property type="evidence" value="ECO:0007669"/>
    <property type="project" value="InterPro"/>
</dbReference>
<dbReference type="GO" id="GO:0009039">
    <property type="term" value="F:urease activity"/>
    <property type="evidence" value="ECO:0007669"/>
    <property type="project" value="UniProtKB-UniRule"/>
</dbReference>
<dbReference type="GO" id="GO:0043419">
    <property type="term" value="P:urea catabolic process"/>
    <property type="evidence" value="ECO:0007669"/>
    <property type="project" value="UniProtKB-UniRule"/>
</dbReference>
<dbReference type="CDD" id="cd00407">
    <property type="entry name" value="Urease_beta"/>
    <property type="match status" value="1"/>
</dbReference>
<dbReference type="Gene3D" id="2.10.150.10">
    <property type="entry name" value="Urease, beta subunit"/>
    <property type="match status" value="1"/>
</dbReference>
<dbReference type="HAMAP" id="MF_01954">
    <property type="entry name" value="Urease_beta"/>
    <property type="match status" value="1"/>
</dbReference>
<dbReference type="InterPro" id="IPR002019">
    <property type="entry name" value="Urease_beta-like"/>
</dbReference>
<dbReference type="InterPro" id="IPR036461">
    <property type="entry name" value="Urease_betasu_sf"/>
</dbReference>
<dbReference type="InterPro" id="IPR050069">
    <property type="entry name" value="Urease_subunit"/>
</dbReference>
<dbReference type="NCBIfam" id="NF009682">
    <property type="entry name" value="PRK13203.1"/>
    <property type="match status" value="1"/>
</dbReference>
<dbReference type="NCBIfam" id="TIGR00192">
    <property type="entry name" value="urease_beta"/>
    <property type="match status" value="1"/>
</dbReference>
<dbReference type="PANTHER" id="PTHR33569">
    <property type="entry name" value="UREASE"/>
    <property type="match status" value="1"/>
</dbReference>
<dbReference type="PANTHER" id="PTHR33569:SF1">
    <property type="entry name" value="UREASE"/>
    <property type="match status" value="1"/>
</dbReference>
<dbReference type="Pfam" id="PF00699">
    <property type="entry name" value="Urease_beta"/>
    <property type="match status" value="1"/>
</dbReference>
<dbReference type="SUPFAM" id="SSF51278">
    <property type="entry name" value="Urease, beta-subunit"/>
    <property type="match status" value="1"/>
</dbReference>
<accession>Q8FQX3</accession>
<proteinExistence type="inferred from homology"/>
<evidence type="ECO:0000255" key="1">
    <source>
        <dbReference type="HAMAP-Rule" id="MF_01954"/>
    </source>
</evidence>
<gene>
    <name evidence="1" type="primary">ureB</name>
    <name type="ordered locus">CE0994</name>
</gene>
<reference key="1">
    <citation type="journal article" date="2003" name="Genome Res.">
        <title>Comparative complete genome sequence analysis of the amino acid replacements responsible for the thermostability of Corynebacterium efficiens.</title>
        <authorList>
            <person name="Nishio Y."/>
            <person name="Nakamura Y."/>
            <person name="Kawarabayasi Y."/>
            <person name="Usuda Y."/>
            <person name="Kimura E."/>
            <person name="Sugimoto S."/>
            <person name="Matsui K."/>
            <person name="Yamagishi A."/>
            <person name="Kikuchi H."/>
            <person name="Ikeo K."/>
            <person name="Gojobori T."/>
        </authorList>
    </citation>
    <scope>NUCLEOTIDE SEQUENCE [LARGE SCALE GENOMIC DNA]</scope>
    <source>
        <strain>DSM 44549 / YS-314 / AJ 12310 / JCM 11189 / NBRC 100395</strain>
    </source>
</reference>
<feature type="chain" id="PRO_0000234245" description="Urease subunit beta">
    <location>
        <begin position="1"/>
        <end position="120"/>
    </location>
</feature>
<protein>
    <recommendedName>
        <fullName evidence="1">Urease subunit beta</fullName>
        <ecNumber evidence="1">3.5.1.5</ecNumber>
    </recommendedName>
    <alternativeName>
        <fullName evidence="1">Urea amidohydrolase subunit beta</fullName>
    </alternativeName>
</protein>
<keyword id="KW-0963">Cytoplasm</keyword>
<keyword id="KW-0378">Hydrolase</keyword>
<keyword id="KW-1185">Reference proteome</keyword>
<organism>
    <name type="scientific">Corynebacterium efficiens (strain DSM 44549 / YS-314 / AJ 12310 / JCM 11189 / NBRC 100395)</name>
    <dbReference type="NCBI Taxonomy" id="196164"/>
    <lineage>
        <taxon>Bacteria</taxon>
        <taxon>Bacillati</taxon>
        <taxon>Actinomycetota</taxon>
        <taxon>Actinomycetes</taxon>
        <taxon>Mycobacteriales</taxon>
        <taxon>Corynebacteriaceae</taxon>
        <taxon>Corynebacterium</taxon>
    </lineage>
</organism>
<sequence>MIPGEYVLSDTPILCNRGREAIEIEVINTGDRPVQIGSHYHFAEVNPLVTFDRVRARGMRLDIPAGTAARLEPGDATTVRLIPFAGGRLIRGFRNEINGAVESCMVSGASEPASGTGETS</sequence>
<comment type="catalytic activity">
    <reaction evidence="1">
        <text>urea + 2 H2O + H(+) = hydrogencarbonate + 2 NH4(+)</text>
        <dbReference type="Rhea" id="RHEA:20557"/>
        <dbReference type="ChEBI" id="CHEBI:15377"/>
        <dbReference type="ChEBI" id="CHEBI:15378"/>
        <dbReference type="ChEBI" id="CHEBI:16199"/>
        <dbReference type="ChEBI" id="CHEBI:17544"/>
        <dbReference type="ChEBI" id="CHEBI:28938"/>
        <dbReference type="EC" id="3.5.1.5"/>
    </reaction>
</comment>
<comment type="pathway">
    <text evidence="1">Nitrogen metabolism; urea degradation; CO(2) and NH(3) from urea (urease route): step 1/1.</text>
</comment>
<comment type="subunit">
    <text evidence="1">Heterotrimer of UreA (gamma), UreB (beta) and UreC (alpha) subunits. Three heterotrimers associate to form the active enzyme.</text>
</comment>
<comment type="subcellular location">
    <subcellularLocation>
        <location evidence="1">Cytoplasm</location>
    </subcellularLocation>
</comment>
<comment type="similarity">
    <text evidence="1">Belongs to the urease beta subunit family.</text>
</comment>